<organism>
    <name type="scientific">Lactobacillus johnsonii (strain CNCM I-12250 / La1 / NCC 533)</name>
    <dbReference type="NCBI Taxonomy" id="257314"/>
    <lineage>
        <taxon>Bacteria</taxon>
        <taxon>Bacillati</taxon>
        <taxon>Bacillota</taxon>
        <taxon>Bacilli</taxon>
        <taxon>Lactobacillales</taxon>
        <taxon>Lactobacillaceae</taxon>
        <taxon>Lactobacillus</taxon>
    </lineage>
</organism>
<evidence type="ECO:0000255" key="1">
    <source>
        <dbReference type="HAMAP-Rule" id="MF_00531"/>
    </source>
</evidence>
<evidence type="ECO:0000305" key="2"/>
<reference key="1">
    <citation type="journal article" date="2004" name="Proc. Natl. Acad. Sci. U.S.A.">
        <title>The genome sequence of the probiotic intestinal bacterium Lactobacillus johnsonii NCC 533.</title>
        <authorList>
            <person name="Pridmore R.D."/>
            <person name="Berger B."/>
            <person name="Desiere F."/>
            <person name="Vilanova D."/>
            <person name="Barretto C."/>
            <person name="Pittet A.-C."/>
            <person name="Zwahlen M.-C."/>
            <person name="Rouvet M."/>
            <person name="Altermann E."/>
            <person name="Barrangou R."/>
            <person name="Mollet B."/>
            <person name="Mercenier A."/>
            <person name="Klaenhammer T."/>
            <person name="Arigoni F."/>
            <person name="Schell M.A."/>
        </authorList>
    </citation>
    <scope>NUCLEOTIDE SEQUENCE [LARGE SCALE GENOMIC DNA]</scope>
    <source>
        <strain>CNCM I-1225 / La1 / NCC 533</strain>
    </source>
</reference>
<sequence length="95" mass="10626">MSRSIKKGPFADASLLKKIEAQEGSEKKQVIKTWSRRSTIFPSFVGFTIAVYDGRKHVPVYITEDMVGHKLGEFVPTRTFRGHKVADKATTTVGK</sequence>
<keyword id="KW-0687">Ribonucleoprotein</keyword>
<keyword id="KW-0689">Ribosomal protein</keyword>
<keyword id="KW-0694">RNA-binding</keyword>
<keyword id="KW-0699">rRNA-binding</keyword>
<accession>Q74L85</accession>
<comment type="function">
    <text evidence="1">Protein S19 forms a complex with S13 that binds strongly to the 16S ribosomal RNA.</text>
</comment>
<comment type="similarity">
    <text evidence="1">Belongs to the universal ribosomal protein uS19 family.</text>
</comment>
<proteinExistence type="inferred from homology"/>
<dbReference type="EMBL" id="AE017198">
    <property type="protein sequence ID" value="AAS08329.1"/>
    <property type="molecule type" value="Genomic_DNA"/>
</dbReference>
<dbReference type="RefSeq" id="WP_003647831.1">
    <property type="nucleotide sequence ID" value="NC_005362.1"/>
</dbReference>
<dbReference type="SMR" id="Q74L85"/>
<dbReference type="GeneID" id="83569758"/>
<dbReference type="KEGG" id="ljo:LJ_0343"/>
<dbReference type="eggNOG" id="COG0185">
    <property type="taxonomic scope" value="Bacteria"/>
</dbReference>
<dbReference type="HOGENOM" id="CLU_144911_0_1_9"/>
<dbReference type="Proteomes" id="UP000000581">
    <property type="component" value="Chromosome"/>
</dbReference>
<dbReference type="GO" id="GO:0005737">
    <property type="term" value="C:cytoplasm"/>
    <property type="evidence" value="ECO:0007669"/>
    <property type="project" value="UniProtKB-ARBA"/>
</dbReference>
<dbReference type="GO" id="GO:0015935">
    <property type="term" value="C:small ribosomal subunit"/>
    <property type="evidence" value="ECO:0007669"/>
    <property type="project" value="InterPro"/>
</dbReference>
<dbReference type="GO" id="GO:0019843">
    <property type="term" value="F:rRNA binding"/>
    <property type="evidence" value="ECO:0007669"/>
    <property type="project" value="UniProtKB-UniRule"/>
</dbReference>
<dbReference type="GO" id="GO:0003735">
    <property type="term" value="F:structural constituent of ribosome"/>
    <property type="evidence" value="ECO:0007669"/>
    <property type="project" value="InterPro"/>
</dbReference>
<dbReference type="GO" id="GO:0000028">
    <property type="term" value="P:ribosomal small subunit assembly"/>
    <property type="evidence" value="ECO:0007669"/>
    <property type="project" value="TreeGrafter"/>
</dbReference>
<dbReference type="GO" id="GO:0006412">
    <property type="term" value="P:translation"/>
    <property type="evidence" value="ECO:0007669"/>
    <property type="project" value="UniProtKB-UniRule"/>
</dbReference>
<dbReference type="FunFam" id="3.30.860.10:FF:000001">
    <property type="entry name" value="30S ribosomal protein S19"/>
    <property type="match status" value="1"/>
</dbReference>
<dbReference type="Gene3D" id="3.30.860.10">
    <property type="entry name" value="30s Ribosomal Protein S19, Chain A"/>
    <property type="match status" value="1"/>
</dbReference>
<dbReference type="HAMAP" id="MF_00531">
    <property type="entry name" value="Ribosomal_uS19"/>
    <property type="match status" value="1"/>
</dbReference>
<dbReference type="InterPro" id="IPR002222">
    <property type="entry name" value="Ribosomal_uS19"/>
</dbReference>
<dbReference type="InterPro" id="IPR005732">
    <property type="entry name" value="Ribosomal_uS19_bac-type"/>
</dbReference>
<dbReference type="InterPro" id="IPR020934">
    <property type="entry name" value="Ribosomal_uS19_CS"/>
</dbReference>
<dbReference type="InterPro" id="IPR023575">
    <property type="entry name" value="Ribosomal_uS19_SF"/>
</dbReference>
<dbReference type="NCBIfam" id="TIGR01050">
    <property type="entry name" value="rpsS_bact"/>
    <property type="match status" value="1"/>
</dbReference>
<dbReference type="PANTHER" id="PTHR11880">
    <property type="entry name" value="RIBOSOMAL PROTEIN S19P FAMILY MEMBER"/>
    <property type="match status" value="1"/>
</dbReference>
<dbReference type="PANTHER" id="PTHR11880:SF8">
    <property type="entry name" value="SMALL RIBOSOMAL SUBUNIT PROTEIN US19M"/>
    <property type="match status" value="1"/>
</dbReference>
<dbReference type="Pfam" id="PF00203">
    <property type="entry name" value="Ribosomal_S19"/>
    <property type="match status" value="1"/>
</dbReference>
<dbReference type="PIRSF" id="PIRSF002144">
    <property type="entry name" value="Ribosomal_S19"/>
    <property type="match status" value="1"/>
</dbReference>
<dbReference type="PRINTS" id="PR00975">
    <property type="entry name" value="RIBOSOMALS19"/>
</dbReference>
<dbReference type="SUPFAM" id="SSF54570">
    <property type="entry name" value="Ribosomal protein S19"/>
    <property type="match status" value="1"/>
</dbReference>
<dbReference type="PROSITE" id="PS00323">
    <property type="entry name" value="RIBOSOMAL_S19"/>
    <property type="match status" value="1"/>
</dbReference>
<name>RS19_LACJO</name>
<feature type="chain" id="PRO_0000129836" description="Small ribosomal subunit protein uS19">
    <location>
        <begin position="1"/>
        <end position="95"/>
    </location>
</feature>
<protein>
    <recommendedName>
        <fullName evidence="1">Small ribosomal subunit protein uS19</fullName>
    </recommendedName>
    <alternativeName>
        <fullName evidence="2">30S ribosomal protein S19</fullName>
    </alternativeName>
</protein>
<gene>
    <name evidence="1" type="primary">rpsS</name>
    <name type="ordered locus">LJ_0343</name>
</gene>